<comment type="function">
    <text evidence="1">Part of the twin-arginine translocation (Tat) system that transports large folded proteins containing a characteristic twin-arginine motif in their signal peptide across membranes. TatA could form the protein-conducting channel of the Tat system.</text>
</comment>
<comment type="subunit">
    <text evidence="1">The Tat system comprises two distinct complexes: a TatABC complex, containing multiple copies of TatA, TatB and TatC subunits, and a separate TatA complex, containing only TatA subunits. Substrates initially bind to the TatABC complex, which probably triggers association of the separate TatA complex to form the active translocon.</text>
</comment>
<comment type="subcellular location">
    <subcellularLocation>
        <location evidence="1">Cell inner membrane</location>
        <topology evidence="1">Single-pass membrane protein</topology>
    </subcellularLocation>
</comment>
<comment type="similarity">
    <text evidence="1">Belongs to the TatA/E family.</text>
</comment>
<feature type="chain" id="PRO_1000044429" description="Sec-independent protein translocase protein TatA">
    <location>
        <begin position="1"/>
        <end position="63"/>
    </location>
</feature>
<feature type="transmembrane region" description="Helical" evidence="1">
    <location>
        <begin position="1"/>
        <end position="21"/>
    </location>
</feature>
<feature type="region of interest" description="Disordered" evidence="2">
    <location>
        <begin position="43"/>
        <end position="63"/>
    </location>
</feature>
<feature type="compositionally biased region" description="Basic and acidic residues" evidence="2">
    <location>
        <begin position="53"/>
        <end position="63"/>
    </location>
</feature>
<reference key="1">
    <citation type="journal article" date="2006" name="Proc. Natl. Acad. Sci. U.S.A.">
        <title>The partitioned Rhizobium etli genome: genetic and metabolic redundancy in seven interacting replicons.</title>
        <authorList>
            <person name="Gonzalez V."/>
            <person name="Santamaria R.I."/>
            <person name="Bustos P."/>
            <person name="Hernandez-Gonzalez I."/>
            <person name="Medrano-Soto A."/>
            <person name="Moreno-Hagelsieb G."/>
            <person name="Janga S.C."/>
            <person name="Ramirez M.A."/>
            <person name="Jimenez-Jacinto V."/>
            <person name="Collado-Vides J."/>
            <person name="Davila G."/>
        </authorList>
    </citation>
    <scope>NUCLEOTIDE SEQUENCE [LARGE SCALE GENOMIC DNA]</scope>
    <source>
        <strain>ATCC 51251 / DSM 11541 / JCM 21823 / NBRC 15573 / CFN 42</strain>
    </source>
</reference>
<name>TATA_RHIEC</name>
<sequence length="63" mass="6984">MGSLSMWHWLIVLVIVLLLFGRGKIPELMGDVAKGIKSFKKGMTDEDAPETAKTVDHKADETK</sequence>
<protein>
    <recommendedName>
        <fullName evidence="1">Sec-independent protein translocase protein TatA</fullName>
    </recommendedName>
</protein>
<organism>
    <name type="scientific">Rhizobium etli (strain ATCC 51251 / DSM 11541 / JCM 21823 / NBRC 15573 / CFN 42)</name>
    <dbReference type="NCBI Taxonomy" id="347834"/>
    <lineage>
        <taxon>Bacteria</taxon>
        <taxon>Pseudomonadati</taxon>
        <taxon>Pseudomonadota</taxon>
        <taxon>Alphaproteobacteria</taxon>
        <taxon>Hyphomicrobiales</taxon>
        <taxon>Rhizobiaceae</taxon>
        <taxon>Rhizobium/Agrobacterium group</taxon>
        <taxon>Rhizobium</taxon>
    </lineage>
</organism>
<dbReference type="EMBL" id="CP000133">
    <property type="protein sequence ID" value="ABC90616.1"/>
    <property type="molecule type" value="Genomic_DNA"/>
</dbReference>
<dbReference type="RefSeq" id="WP_011425113.1">
    <property type="nucleotide sequence ID" value="NC_007761.1"/>
</dbReference>
<dbReference type="SMR" id="Q2K970"/>
<dbReference type="KEGG" id="ret:RHE_CH01823"/>
<dbReference type="eggNOG" id="COG1826">
    <property type="taxonomic scope" value="Bacteria"/>
</dbReference>
<dbReference type="HOGENOM" id="CLU_086034_5_0_5"/>
<dbReference type="OrthoDB" id="7161179at2"/>
<dbReference type="Proteomes" id="UP000001936">
    <property type="component" value="Chromosome"/>
</dbReference>
<dbReference type="GO" id="GO:0033281">
    <property type="term" value="C:TAT protein transport complex"/>
    <property type="evidence" value="ECO:0007669"/>
    <property type="project" value="UniProtKB-UniRule"/>
</dbReference>
<dbReference type="GO" id="GO:0008320">
    <property type="term" value="F:protein transmembrane transporter activity"/>
    <property type="evidence" value="ECO:0007669"/>
    <property type="project" value="UniProtKB-UniRule"/>
</dbReference>
<dbReference type="GO" id="GO:0043953">
    <property type="term" value="P:protein transport by the Tat complex"/>
    <property type="evidence" value="ECO:0007669"/>
    <property type="project" value="UniProtKB-UniRule"/>
</dbReference>
<dbReference type="Gene3D" id="1.20.5.3310">
    <property type="match status" value="1"/>
</dbReference>
<dbReference type="HAMAP" id="MF_00236">
    <property type="entry name" value="TatA_E"/>
    <property type="match status" value="1"/>
</dbReference>
<dbReference type="InterPro" id="IPR003369">
    <property type="entry name" value="TatA/B/E"/>
</dbReference>
<dbReference type="InterPro" id="IPR006312">
    <property type="entry name" value="TatA/E"/>
</dbReference>
<dbReference type="NCBIfam" id="NF001940">
    <property type="entry name" value="PRK00720.1"/>
    <property type="match status" value="1"/>
</dbReference>
<dbReference type="NCBIfam" id="TIGR01411">
    <property type="entry name" value="tatAE"/>
    <property type="match status" value="1"/>
</dbReference>
<dbReference type="PANTHER" id="PTHR42982">
    <property type="entry name" value="SEC-INDEPENDENT PROTEIN TRANSLOCASE PROTEIN TATA"/>
    <property type="match status" value="1"/>
</dbReference>
<dbReference type="PANTHER" id="PTHR42982:SF1">
    <property type="entry name" value="SEC-INDEPENDENT PROTEIN TRANSLOCASE PROTEIN TATA"/>
    <property type="match status" value="1"/>
</dbReference>
<dbReference type="Pfam" id="PF02416">
    <property type="entry name" value="TatA_B_E"/>
    <property type="match status" value="1"/>
</dbReference>
<accession>Q2K970</accession>
<gene>
    <name evidence="1" type="primary">tatA</name>
    <name type="ordered locus">RHE_CH01823</name>
</gene>
<evidence type="ECO:0000255" key="1">
    <source>
        <dbReference type="HAMAP-Rule" id="MF_00236"/>
    </source>
</evidence>
<evidence type="ECO:0000256" key="2">
    <source>
        <dbReference type="SAM" id="MobiDB-lite"/>
    </source>
</evidence>
<proteinExistence type="inferred from homology"/>
<keyword id="KW-0997">Cell inner membrane</keyword>
<keyword id="KW-1003">Cell membrane</keyword>
<keyword id="KW-0472">Membrane</keyword>
<keyword id="KW-0653">Protein transport</keyword>
<keyword id="KW-1185">Reference proteome</keyword>
<keyword id="KW-0811">Translocation</keyword>
<keyword id="KW-0812">Transmembrane</keyword>
<keyword id="KW-1133">Transmembrane helix</keyword>
<keyword id="KW-0813">Transport</keyword>